<reference key="1">
    <citation type="journal article" date="2003" name="Gene">
        <title>SF4 and SFRS14, two related putative splicing factors on human chromosome 19p13.11.</title>
        <authorList>
            <person name="Sampson N.D."/>
            <person name="Hewitt J.E."/>
        </authorList>
    </citation>
    <scope>NUCLEOTIDE SEQUENCE [MRNA] (ISOFORM 1)</scope>
    <scope>ALTERNATIVE SPLICING</scope>
    <scope>TISSUE SPECIFICITY</scope>
    <scope>VARIANT SER-206</scope>
</reference>
<reference key="2">
    <citation type="journal article" date="1997" name="DNA Res.">
        <title>Prediction of the coding sequences of unidentified human genes. VII. The complete sequences of 100 new cDNA clones from brain which can code for large proteins in vitro.</title>
        <authorList>
            <person name="Nagase T."/>
            <person name="Ishikawa K."/>
            <person name="Nakajima D."/>
            <person name="Ohira M."/>
            <person name="Seki N."/>
            <person name="Miyajima N."/>
            <person name="Tanaka A."/>
            <person name="Kotani H."/>
            <person name="Nomura N."/>
            <person name="Ohara O."/>
        </authorList>
    </citation>
    <scope>NUCLEOTIDE SEQUENCE [LARGE SCALE MRNA] (ISOFORM 1)</scope>
    <source>
        <tissue>Brain</tissue>
    </source>
</reference>
<reference key="3">
    <citation type="submission" date="2005-08" db="EMBL/GenBank/DDBJ databases">
        <authorList>
            <person name="Ohara O."/>
            <person name="Nagase T."/>
            <person name="Kikuno R."/>
            <person name="Nomura N."/>
        </authorList>
    </citation>
    <scope>SEQUENCE REVISION</scope>
</reference>
<reference key="4">
    <citation type="journal article" date="2007" name="BMC Genomics">
        <title>The full-ORF clone resource of the German cDNA consortium.</title>
        <authorList>
            <person name="Bechtel S."/>
            <person name="Rosenfelder H."/>
            <person name="Duda A."/>
            <person name="Schmidt C.P."/>
            <person name="Ernst U."/>
            <person name="Wellenreuther R."/>
            <person name="Mehrle A."/>
            <person name="Schuster C."/>
            <person name="Bahr A."/>
            <person name="Bloecker H."/>
            <person name="Heubner D."/>
            <person name="Hoerlein A."/>
            <person name="Michel G."/>
            <person name="Wedler H."/>
            <person name="Koehrer K."/>
            <person name="Ottenwaelder B."/>
            <person name="Poustka A."/>
            <person name="Wiemann S."/>
            <person name="Schupp I."/>
        </authorList>
    </citation>
    <scope>NUCLEOTIDE SEQUENCE [LARGE SCALE MRNA] (ISOFORMS 1 AND 4)</scope>
    <scope>VARIANT SER-206</scope>
    <source>
        <tissue>Endometrial tumor</tissue>
        <tissue>Testis</tissue>
    </source>
</reference>
<reference key="5">
    <citation type="journal article" date="2004" name="Nature">
        <title>The DNA sequence and biology of human chromosome 19.</title>
        <authorList>
            <person name="Grimwood J."/>
            <person name="Gordon L.A."/>
            <person name="Olsen A.S."/>
            <person name="Terry A."/>
            <person name="Schmutz J."/>
            <person name="Lamerdin J.E."/>
            <person name="Hellsten U."/>
            <person name="Goodstein D."/>
            <person name="Couronne O."/>
            <person name="Tran-Gyamfi M."/>
            <person name="Aerts A."/>
            <person name="Altherr M."/>
            <person name="Ashworth L."/>
            <person name="Bajorek E."/>
            <person name="Black S."/>
            <person name="Branscomb E."/>
            <person name="Caenepeel S."/>
            <person name="Carrano A.V."/>
            <person name="Caoile C."/>
            <person name="Chan Y.M."/>
            <person name="Christensen M."/>
            <person name="Cleland C.A."/>
            <person name="Copeland A."/>
            <person name="Dalin E."/>
            <person name="Dehal P."/>
            <person name="Denys M."/>
            <person name="Detter J.C."/>
            <person name="Escobar J."/>
            <person name="Flowers D."/>
            <person name="Fotopulos D."/>
            <person name="Garcia C."/>
            <person name="Georgescu A.M."/>
            <person name="Glavina T."/>
            <person name="Gomez M."/>
            <person name="Gonzales E."/>
            <person name="Groza M."/>
            <person name="Hammon N."/>
            <person name="Hawkins T."/>
            <person name="Haydu L."/>
            <person name="Ho I."/>
            <person name="Huang W."/>
            <person name="Israni S."/>
            <person name="Jett J."/>
            <person name="Kadner K."/>
            <person name="Kimball H."/>
            <person name="Kobayashi A."/>
            <person name="Larionov V."/>
            <person name="Leem S.-H."/>
            <person name="Lopez F."/>
            <person name="Lou Y."/>
            <person name="Lowry S."/>
            <person name="Malfatti S."/>
            <person name="Martinez D."/>
            <person name="McCready P.M."/>
            <person name="Medina C."/>
            <person name="Morgan J."/>
            <person name="Nelson K."/>
            <person name="Nolan M."/>
            <person name="Ovcharenko I."/>
            <person name="Pitluck S."/>
            <person name="Pollard M."/>
            <person name="Popkie A.P."/>
            <person name="Predki P."/>
            <person name="Quan G."/>
            <person name="Ramirez L."/>
            <person name="Rash S."/>
            <person name="Retterer J."/>
            <person name="Rodriguez A."/>
            <person name="Rogers S."/>
            <person name="Salamov A."/>
            <person name="Salazar A."/>
            <person name="She X."/>
            <person name="Smith D."/>
            <person name="Slezak T."/>
            <person name="Solovyev V."/>
            <person name="Thayer N."/>
            <person name="Tice H."/>
            <person name="Tsai M."/>
            <person name="Ustaszewska A."/>
            <person name="Vo N."/>
            <person name="Wagner M."/>
            <person name="Wheeler J."/>
            <person name="Wu K."/>
            <person name="Xie G."/>
            <person name="Yang J."/>
            <person name="Dubchak I."/>
            <person name="Furey T.S."/>
            <person name="DeJong P."/>
            <person name="Dickson M."/>
            <person name="Gordon D."/>
            <person name="Eichler E.E."/>
            <person name="Pennacchio L.A."/>
            <person name="Richardson P."/>
            <person name="Stubbs L."/>
            <person name="Rokhsar D.S."/>
            <person name="Myers R.M."/>
            <person name="Rubin E.M."/>
            <person name="Lucas S.M."/>
        </authorList>
    </citation>
    <scope>NUCLEOTIDE SEQUENCE [LARGE SCALE GENOMIC DNA]</scope>
</reference>
<reference key="6">
    <citation type="journal article" date="2004" name="Genome Res.">
        <title>The status, quality, and expansion of the NIH full-length cDNA project: the Mammalian Gene Collection (MGC).</title>
        <authorList>
            <consortium name="The MGC Project Team"/>
        </authorList>
    </citation>
    <scope>NUCLEOTIDE SEQUENCE [LARGE SCALE MRNA] (ISOFORM 3)</scope>
    <scope>VARIANT SER-206</scope>
    <source>
        <tissue>Duodenum</tissue>
    </source>
</reference>
<reference key="7">
    <citation type="journal article" date="2007" name="Science">
        <title>ATM and ATR substrate analysis reveals extensive protein networks responsive to DNA damage.</title>
        <authorList>
            <person name="Matsuoka S."/>
            <person name="Ballif B.A."/>
            <person name="Smogorzewska A."/>
            <person name="McDonald E.R. III"/>
            <person name="Hurov K.E."/>
            <person name="Luo J."/>
            <person name="Bakalarski C.E."/>
            <person name="Zhao Z."/>
            <person name="Solimini N."/>
            <person name="Lerenthal Y."/>
            <person name="Shiloh Y."/>
            <person name="Gygi S.P."/>
            <person name="Elledge S.J."/>
        </authorList>
    </citation>
    <scope>PHOSPHORYLATION [LARGE SCALE ANALYSIS] AT THR-7</scope>
    <scope>IDENTIFICATION BY MASS SPECTROMETRY [LARGE SCALE ANALYSIS]</scope>
    <source>
        <tissue>Embryonic kidney</tissue>
    </source>
</reference>
<reference key="8">
    <citation type="journal article" date="2008" name="Proc. Natl. Acad. Sci. U.S.A.">
        <title>A quantitative atlas of mitotic phosphorylation.</title>
        <authorList>
            <person name="Dephoure N."/>
            <person name="Zhou C."/>
            <person name="Villen J."/>
            <person name="Beausoleil S.A."/>
            <person name="Bakalarski C.E."/>
            <person name="Elledge S.J."/>
            <person name="Gygi S.P."/>
        </authorList>
    </citation>
    <scope>PHOSPHORYLATION [LARGE SCALE ANALYSIS] AT THR-275 AND SER-277</scope>
    <scope>IDENTIFICATION BY MASS SPECTROMETRY [LARGE SCALE ANALYSIS]</scope>
    <source>
        <tissue>Cervix carcinoma</tissue>
    </source>
</reference>
<reference key="9">
    <citation type="journal article" date="2009" name="Anal. Chem.">
        <title>Lys-N and trypsin cover complementary parts of the phosphoproteome in a refined SCX-based approach.</title>
        <authorList>
            <person name="Gauci S."/>
            <person name="Helbig A.O."/>
            <person name="Slijper M."/>
            <person name="Krijgsveld J."/>
            <person name="Heck A.J."/>
            <person name="Mohammed S."/>
        </authorList>
    </citation>
    <scope>IDENTIFICATION BY MASS SPECTROMETRY [LARGE SCALE ANALYSIS]</scope>
</reference>
<reference key="10">
    <citation type="journal article" date="2009" name="Sci. Signal.">
        <title>Quantitative phosphoproteomic analysis of T cell receptor signaling reveals system-wide modulation of protein-protein interactions.</title>
        <authorList>
            <person name="Mayya V."/>
            <person name="Lundgren D.H."/>
            <person name="Hwang S.-I."/>
            <person name="Rezaul K."/>
            <person name="Wu L."/>
            <person name="Eng J.K."/>
            <person name="Rodionov V."/>
            <person name="Han D.K."/>
        </authorList>
    </citation>
    <scope>IDENTIFICATION BY MASS SPECTROMETRY [LARGE SCALE ANALYSIS]</scope>
    <source>
        <tissue>Leukemic T-cell</tissue>
    </source>
</reference>
<reference key="11">
    <citation type="journal article" date="2010" name="Sci. Signal.">
        <title>Quantitative phosphoproteomics reveals widespread full phosphorylation site occupancy during mitosis.</title>
        <authorList>
            <person name="Olsen J.V."/>
            <person name="Vermeulen M."/>
            <person name="Santamaria A."/>
            <person name="Kumar C."/>
            <person name="Miller M.L."/>
            <person name="Jensen L.J."/>
            <person name="Gnad F."/>
            <person name="Cox J."/>
            <person name="Jensen T.S."/>
            <person name="Nigg E.A."/>
            <person name="Brunak S."/>
            <person name="Mann M."/>
        </authorList>
    </citation>
    <scope>IDENTIFICATION BY MASS SPECTROMETRY [LARGE SCALE ANALYSIS]</scope>
    <source>
        <tissue>Cervix carcinoma</tissue>
    </source>
</reference>
<reference key="12">
    <citation type="journal article" date="2011" name="BMC Syst. Biol.">
        <title>Initial characterization of the human central proteome.</title>
        <authorList>
            <person name="Burkard T.R."/>
            <person name="Planyavsky M."/>
            <person name="Kaupe I."/>
            <person name="Breitwieser F.P."/>
            <person name="Buerckstuemmer T."/>
            <person name="Bennett K.L."/>
            <person name="Superti-Furga G."/>
            <person name="Colinge J."/>
        </authorList>
    </citation>
    <scope>IDENTIFICATION BY MASS SPECTROMETRY [LARGE SCALE ANALYSIS]</scope>
</reference>
<reference key="13">
    <citation type="journal article" date="2013" name="J. Proteome Res.">
        <title>Toward a comprehensive characterization of a human cancer cell phosphoproteome.</title>
        <authorList>
            <person name="Zhou H."/>
            <person name="Di Palma S."/>
            <person name="Preisinger C."/>
            <person name="Peng M."/>
            <person name="Polat A.N."/>
            <person name="Heck A.J."/>
            <person name="Mohammed S."/>
        </authorList>
    </citation>
    <scope>PHOSPHORYLATION [LARGE SCALE ANALYSIS] AT SER-96; SER-224; SER-315; SER-573 AND SER-603</scope>
    <scope>IDENTIFICATION BY MASS SPECTROMETRY [LARGE SCALE ANALYSIS]</scope>
    <source>
        <tissue>Cervix carcinoma</tissue>
        <tissue>Erythroleukemia</tissue>
    </source>
</reference>
<reference key="14">
    <citation type="journal article" date="2014" name="J. Proteomics">
        <title>An enzyme assisted RP-RPLC approach for in-depth analysis of human liver phosphoproteome.</title>
        <authorList>
            <person name="Bian Y."/>
            <person name="Song C."/>
            <person name="Cheng K."/>
            <person name="Dong M."/>
            <person name="Wang F."/>
            <person name="Huang J."/>
            <person name="Sun D."/>
            <person name="Wang L."/>
            <person name="Ye M."/>
            <person name="Zou H."/>
        </authorList>
    </citation>
    <scope>PHOSPHORYLATION [LARGE SCALE ANALYSIS] AT SER-573 AND SER-754</scope>
    <scope>IDENTIFICATION BY MASS SPECTROMETRY [LARGE SCALE ANALYSIS]</scope>
    <source>
        <tissue>Liver</tissue>
    </source>
</reference>
<reference key="15">
    <citation type="journal article" date="2017" name="Nat. Struct. Mol. Biol.">
        <title>Site-specific mapping of the human SUMO proteome reveals co-modification with phosphorylation.</title>
        <authorList>
            <person name="Hendriks I.A."/>
            <person name="Lyon D."/>
            <person name="Young C."/>
            <person name="Jensen L.J."/>
            <person name="Vertegaal A.C."/>
            <person name="Nielsen M.L."/>
        </authorList>
    </citation>
    <scope>SUMOYLATION [LARGE SCALE ANALYSIS] AT LYS-228; LYS-305 AND LYS-650</scope>
    <scope>IDENTIFICATION BY MASS SPECTROMETRY [LARGE SCALE ANALYSIS]</scope>
</reference>
<reference key="16">
    <citation type="submission" date="2005-11" db="PDB data bank">
        <title>Solution structure of SURP domain in SFRS14 protein.</title>
        <authorList>
            <consortium name="RIKEN structural genomics initiative (RSGI)"/>
        </authorList>
    </citation>
    <scope>STRUCTURE BY NMR OF 587-639</scope>
</reference>
<organism>
    <name type="scientific">Homo sapiens</name>
    <name type="common">Human</name>
    <dbReference type="NCBI Taxonomy" id="9606"/>
    <lineage>
        <taxon>Eukaryota</taxon>
        <taxon>Metazoa</taxon>
        <taxon>Chordata</taxon>
        <taxon>Craniata</taxon>
        <taxon>Vertebrata</taxon>
        <taxon>Euteleostomi</taxon>
        <taxon>Mammalia</taxon>
        <taxon>Eutheria</taxon>
        <taxon>Euarchontoglires</taxon>
        <taxon>Primates</taxon>
        <taxon>Haplorrhini</taxon>
        <taxon>Catarrhini</taxon>
        <taxon>Hominidae</taxon>
        <taxon>Homo</taxon>
    </lineage>
</organism>
<gene>
    <name type="primary">SUGP2</name>
    <name type="synonym">KIAA0365</name>
    <name type="synonym">SFRS14</name>
</gene>
<accession>Q8IX01</accession>
<accession>C9JI71</accession>
<accession>O15071</accession>
<accession>O60369</accession>
<accession>Q5JPH7</accession>
<accession>Q8WUF7</accession>
<feature type="chain" id="PRO_0000097708" description="SURP and G-patch domain-containing protein 2">
    <location>
        <begin position="1"/>
        <end position="1082"/>
    </location>
</feature>
<feature type="repeat" description="SURP motif 1">
    <location>
        <begin position="590"/>
        <end position="633"/>
    </location>
</feature>
<feature type="repeat" description="SURP motif 2">
    <location>
        <begin position="787"/>
        <end position="830"/>
    </location>
</feature>
<feature type="domain" description="G-patch" evidence="3">
    <location>
        <begin position="1011"/>
        <end position="1057"/>
    </location>
</feature>
<feature type="region of interest" description="Disordered" evidence="4">
    <location>
        <begin position="65"/>
        <end position="97"/>
    </location>
</feature>
<feature type="region of interest" description="Disordered" evidence="4">
    <location>
        <begin position="694"/>
        <end position="779"/>
    </location>
</feature>
<feature type="region of interest" description="Disordered" evidence="4">
    <location>
        <begin position="849"/>
        <end position="930"/>
    </location>
</feature>
<feature type="region of interest" description="Disordered" evidence="4">
    <location>
        <begin position="982"/>
        <end position="1002"/>
    </location>
</feature>
<feature type="region of interest" description="Disordered" evidence="4">
    <location>
        <begin position="1030"/>
        <end position="1061"/>
    </location>
</feature>
<feature type="short sequence motif" description="Nuclear localization signal" evidence="2">
    <location>
        <begin position="995"/>
        <end position="1000"/>
    </location>
</feature>
<feature type="compositionally biased region" description="Basic and acidic residues" evidence="4">
    <location>
        <begin position="71"/>
        <end position="81"/>
    </location>
</feature>
<feature type="compositionally biased region" description="Low complexity" evidence="4">
    <location>
        <begin position="697"/>
        <end position="708"/>
    </location>
</feature>
<feature type="compositionally biased region" description="Basic and acidic residues" evidence="4">
    <location>
        <begin position="727"/>
        <end position="738"/>
    </location>
</feature>
<feature type="compositionally biased region" description="Acidic residues" evidence="4">
    <location>
        <begin position="868"/>
        <end position="877"/>
    </location>
</feature>
<feature type="compositionally biased region" description="Acidic residues" evidence="4">
    <location>
        <begin position="885"/>
        <end position="904"/>
    </location>
</feature>
<feature type="compositionally biased region" description="Basic residues" evidence="4">
    <location>
        <begin position="990"/>
        <end position="999"/>
    </location>
</feature>
<feature type="modified residue" description="Phosphothreonine" evidence="11">
    <location>
        <position position="7"/>
    </location>
</feature>
<feature type="modified residue" description="Phosphoserine" evidence="13">
    <location>
        <position position="96"/>
    </location>
</feature>
<feature type="modified residue" description="Phosphoserine" evidence="13">
    <location>
        <position position="224"/>
    </location>
</feature>
<feature type="modified residue" description="Phosphothreonine" evidence="12">
    <location>
        <position position="275"/>
    </location>
</feature>
<feature type="modified residue" description="Phosphoserine" evidence="12">
    <location>
        <position position="277"/>
    </location>
</feature>
<feature type="modified residue" description="Phosphoserine" evidence="13">
    <location>
        <position position="315"/>
    </location>
</feature>
<feature type="modified residue" description="Phosphoserine" evidence="13 14">
    <location>
        <position position="573"/>
    </location>
</feature>
<feature type="modified residue" description="Phosphoserine" evidence="13">
    <location>
        <position position="603"/>
    </location>
</feature>
<feature type="modified residue" description="Phosphoserine" evidence="14">
    <location>
        <position position="754"/>
    </location>
</feature>
<feature type="modified residue" description="Phosphoserine" evidence="1">
    <location>
        <position position="757"/>
    </location>
</feature>
<feature type="modified residue" description="Phosphoserine" evidence="1">
    <location>
        <position position="863"/>
    </location>
</feature>
<feature type="cross-link" description="Glycyl lysine isopeptide (Lys-Gly) (interchain with G-Cter in SUMO2)" evidence="15">
    <location>
        <position position="228"/>
    </location>
</feature>
<feature type="cross-link" description="Glycyl lysine isopeptide (Lys-Gly) (interchain with G-Cter in SUMO2)" evidence="15">
    <location>
        <position position="305"/>
    </location>
</feature>
<feature type="cross-link" description="Glycyl lysine isopeptide (Lys-Gly) (interchain with G-Cter in SUMO2)" evidence="15">
    <location>
        <position position="650"/>
    </location>
</feature>
<feature type="splice variant" id="VSP_013112" description="In isoform 3 and isoform 4." evidence="8 9">
    <location>
        <begin position="890"/>
        <end position="941"/>
    </location>
</feature>
<feature type="splice variant" id="VSP_013113" description="In isoform 3." evidence="8">
    <original>GTPSEGEGLGADGQEHKEDTFDVFRQRMMQMYRHKRANK</original>
    <variation>YAAGSLGWEWVGPQSFHLQPAAWLLHSQDGLQLAVDFCFLNRRHLQMRS</variation>
    <location>
        <begin position="1044"/>
        <end position="1082"/>
    </location>
</feature>
<feature type="sequence variant" id="VAR_023711" description="In dbSNP:rs4808907." evidence="5 6 7">
    <original>G</original>
    <variation>S</variation>
    <location>
        <position position="206"/>
    </location>
</feature>
<feature type="sequence variant" id="VAR_051341" description="In dbSNP:rs10404860.">
    <original>M</original>
    <variation>T</variation>
    <location>
        <position position="552"/>
    </location>
</feature>
<feature type="sequence variant" id="VAR_051342" description="In dbSNP:rs10414535.">
    <original>Q</original>
    <variation>R</variation>
    <location>
        <position position="649"/>
    </location>
</feature>
<feature type="sequence variant" id="VAR_051343" description="In dbSNP:rs34540303.">
    <original>Q</original>
    <variation>R</variation>
    <location>
        <position position="722"/>
    </location>
</feature>
<feature type="sequence variant" id="VAR_051344" description="In dbSNP:rs35646935.">
    <original>R</original>
    <variation>Q</variation>
    <location>
        <position position="881"/>
    </location>
</feature>
<feature type="helix" evidence="16">
    <location>
        <begin position="588"/>
        <end position="599"/>
    </location>
</feature>
<feature type="helix" evidence="16">
    <location>
        <begin position="604"/>
        <end position="612"/>
    </location>
</feature>
<feature type="helix" evidence="16">
    <location>
        <begin position="614"/>
        <end position="616"/>
    </location>
</feature>
<feature type="turn" evidence="16">
    <location>
        <begin position="618"/>
        <end position="620"/>
    </location>
</feature>
<feature type="strand" evidence="16">
    <location>
        <begin position="623"/>
        <end position="625"/>
    </location>
</feature>
<feature type="helix" evidence="16">
    <location>
        <begin position="626"/>
        <end position="639"/>
    </location>
</feature>
<name>SUGP2_HUMAN</name>
<keyword id="KW-0002">3D-structure</keyword>
<keyword id="KW-0025">Alternative splicing</keyword>
<keyword id="KW-1017">Isopeptide bond</keyword>
<keyword id="KW-0507">mRNA processing</keyword>
<keyword id="KW-0508">mRNA splicing</keyword>
<keyword id="KW-0539">Nucleus</keyword>
<keyword id="KW-0597">Phosphoprotein</keyword>
<keyword id="KW-1267">Proteomics identification</keyword>
<keyword id="KW-1185">Reference proteome</keyword>
<keyword id="KW-0677">Repeat</keyword>
<keyword id="KW-0832">Ubl conjugation</keyword>
<comment type="function">
    <text evidence="10">May play a role in mRNA splicing.</text>
</comment>
<comment type="interaction">
    <interactant intactId="EBI-12317645">
        <id>Q8IX01-3</id>
    </interactant>
    <interactant intactId="EBI-618309">
        <id>Q08379</id>
        <label>GOLGA2</label>
    </interactant>
    <organismsDiffer>false</organismsDiffer>
    <experiments>3</experiments>
</comment>
<comment type="subcellular location">
    <subcellularLocation>
        <location evidence="10">Nucleus</location>
    </subcellularLocation>
</comment>
<comment type="alternative products">
    <event type="alternative splicing"/>
    <isoform>
        <id>Q8IX01-1</id>
        <name>1</name>
        <sequence type="displayed"/>
    </isoform>
    <isoform>
        <id>Q8IX01-3</id>
        <name>3</name>
        <sequence type="described" ref="VSP_013112 VSP_013113"/>
    </isoform>
    <isoform>
        <id>Q8IX01-4</id>
        <name>4</name>
        <sequence type="described" ref="VSP_013112"/>
    </isoform>
</comment>
<comment type="tissue specificity">
    <text evidence="5">Detected in adult testis, and in fetal brain and kidney.</text>
</comment>
<comment type="sequence caution" evidence="10">
    <conflict type="erroneous gene model prediction">
        <sequence resource="EMBL-CDS" id="AAC06129"/>
    </conflict>
</comment>
<comment type="sequence caution" evidence="10">
    <conflict type="erroneous initiation">
        <sequence resource="EMBL-CDS" id="AAH20586"/>
    </conflict>
    <text>Truncated N-terminus.</text>
</comment>
<comment type="sequence caution" evidence="10">
    <conflict type="erroneous initiation">
        <sequence resource="EMBL-CDS" id="BAA20820"/>
    </conflict>
    <text>Extended N-terminus.</text>
</comment>
<sequence>MAARRITQETFDAVLQEKAKRYHMDASGEAVSETLQFKAQDLLRAVPRSRAEMYDDVHSDGRYSLSGSVAHSRDAGREGLRSDVFPGPSFRSSNPSISDDSYFRKECGRDLEFSHSDSRDQVIGHRKLGHFRSQDWKFALRGSWEQDFGHPVSQESSWSQEYSFGPSAVLGDFGSSRLIEKECLEKESRDYDVDHPGEADSVLRGGSQVQARGRALNIVDQEGSLLGKGETQGLLTAKGGVGKLVTLRNVSTKKIPTVNRITPKTQGTNQIQKNTPSPDVTLGTNPGTEDIQFPIQKIPLGLDLKNLRLPRRKMSFDIIDKSDVFSRFGIEIIKWAGFHTIKDDIKFSQLFQTLFELETETCAKMLASFKCSLKPEHRDFCFFTIKFLKHSALKTPRVDNEFLNMLLDKGAVKTKNCFFEIIKPFDKYIMRLQDRLLKSVTPLLMACNAYELSVKMKTLSNPLDLALALETTNSLCRKSLALLGQTFSLASSFRQEKILEAVGLQDIAPSPAAFPNFEDSTLFGREYIDHLKAWLVSSGCPLQVKKAEPEPMREEEKMIPPTKPEIQAKAPSSLSDAVPQRADHRVVGTIDQLVKRVIEGSLSPKERTLLKEDPAYWFLSDENSLEYKYYKLKLAEMQRMSENLRGADQKPTSADCAVRAMLYSRAVRNLKKKLLPWQRRGLLRAQGLRGWKARRATTGTQTLLSSGTRLKHHGRQAPGLSQAKPSLPDRNDAAKDCPPDPVGPSPQDPSLEASGPSPKPAGVDISEAPQTSSPCPSADIDMKTMETAEKLARFVAQVGPEIEQFSIENSTDNPDLWFLHDQNSSAFKFYRKKVFELCPSICFTSSPHNLHTGGGDTTGSQESPVDLMEGEAEFEDEPPPREAELESPEVMPEEEDEDDEDGGEEAPAPGGAGKSEGSTPADGLPGEAAEDDLAGAPALSQASSGTCFPRKRISSKSLKVGMIPAPKRVCLIQEPKVHEPVRIAYDRPRGRPMSKKKKPKDLDFAQQKLTDKNLGFQMLQKMGWKEGHGLGSLGKGIREPVSVGTPSEGEGLGADGQEHKEDTFDVFRQRMMQMYRHKRANK</sequence>
<proteinExistence type="evidence at protein level"/>
<evidence type="ECO:0000250" key="1">
    <source>
        <dbReference type="UniProtKB" id="Q8CH09"/>
    </source>
</evidence>
<evidence type="ECO:0000255" key="2"/>
<evidence type="ECO:0000255" key="3">
    <source>
        <dbReference type="PROSITE-ProRule" id="PRU00092"/>
    </source>
</evidence>
<evidence type="ECO:0000256" key="4">
    <source>
        <dbReference type="SAM" id="MobiDB-lite"/>
    </source>
</evidence>
<evidence type="ECO:0000269" key="5">
    <source>
    </source>
</evidence>
<evidence type="ECO:0000269" key="6">
    <source>
    </source>
</evidence>
<evidence type="ECO:0000269" key="7">
    <source>
    </source>
</evidence>
<evidence type="ECO:0000303" key="8">
    <source>
    </source>
</evidence>
<evidence type="ECO:0000303" key="9">
    <source>
    </source>
</evidence>
<evidence type="ECO:0000305" key="10"/>
<evidence type="ECO:0007744" key="11">
    <source>
    </source>
</evidence>
<evidence type="ECO:0007744" key="12">
    <source>
    </source>
</evidence>
<evidence type="ECO:0007744" key="13">
    <source>
    </source>
</evidence>
<evidence type="ECO:0007744" key="14">
    <source>
    </source>
</evidence>
<evidence type="ECO:0007744" key="15">
    <source>
    </source>
</evidence>
<evidence type="ECO:0007829" key="16">
    <source>
        <dbReference type="PDB" id="1X4P"/>
    </source>
</evidence>
<dbReference type="EMBL" id="AF518874">
    <property type="protein sequence ID" value="AAN77117.1"/>
    <property type="molecule type" value="mRNA"/>
</dbReference>
<dbReference type="EMBL" id="AB002363">
    <property type="protein sequence ID" value="BAA20820.2"/>
    <property type="status" value="ALT_INIT"/>
    <property type="molecule type" value="mRNA"/>
</dbReference>
<dbReference type="EMBL" id="BX647813">
    <property type="protein sequence ID" value="CAI46012.1"/>
    <property type="molecule type" value="mRNA"/>
</dbReference>
<dbReference type="EMBL" id="AL832488">
    <property type="protein sequence ID" value="CAI46117.1"/>
    <property type="molecule type" value="mRNA"/>
</dbReference>
<dbReference type="EMBL" id="AC004447">
    <property type="protein sequence ID" value="AAC06129.1"/>
    <property type="status" value="ALT_SEQ"/>
    <property type="molecule type" value="Genomic_DNA"/>
</dbReference>
<dbReference type="EMBL" id="BC020586">
    <property type="protein sequence ID" value="AAH20586.1"/>
    <property type="status" value="ALT_INIT"/>
    <property type="molecule type" value="mRNA"/>
</dbReference>
<dbReference type="CCDS" id="CCDS12392.1">
    <molecule id="Q8IX01-1"/>
</dbReference>
<dbReference type="PIR" id="T03030">
    <property type="entry name" value="T03030"/>
</dbReference>
<dbReference type="RefSeq" id="NP_001017392.2">
    <molecule id="Q8IX01-1"/>
    <property type="nucleotide sequence ID" value="NM_001017392.5"/>
</dbReference>
<dbReference type="RefSeq" id="NP_001308626.1">
    <molecule id="Q8IX01-1"/>
    <property type="nucleotide sequence ID" value="NM_001321697.2"/>
</dbReference>
<dbReference type="RefSeq" id="NP_001339000.1">
    <molecule id="Q8IX01-1"/>
    <property type="nucleotide sequence ID" value="NM_001352071.2"/>
</dbReference>
<dbReference type="RefSeq" id="NP_055699.2">
    <molecule id="Q8IX01-1"/>
    <property type="nucleotide sequence ID" value="NM_014884.5"/>
</dbReference>
<dbReference type="RefSeq" id="XP_016881626.1">
    <property type="nucleotide sequence ID" value="XM_017026137.1"/>
</dbReference>
<dbReference type="PDB" id="1X4P">
    <property type="method" value="NMR"/>
    <property type="chains" value="A=587-639"/>
</dbReference>
<dbReference type="PDBsum" id="1X4P"/>
<dbReference type="SMR" id="Q8IX01"/>
<dbReference type="BioGRID" id="115449">
    <property type="interactions" value="237"/>
</dbReference>
<dbReference type="FunCoup" id="Q8IX01">
    <property type="interactions" value="2706"/>
</dbReference>
<dbReference type="IntAct" id="Q8IX01">
    <property type="interactions" value="116"/>
</dbReference>
<dbReference type="MINT" id="Q8IX01"/>
<dbReference type="STRING" id="9606.ENSP00000472914"/>
<dbReference type="GlyCosmos" id="Q8IX01">
    <property type="glycosylation" value="3 sites, 1 glycan"/>
</dbReference>
<dbReference type="GlyGen" id="Q8IX01">
    <property type="glycosylation" value="3 sites, 1 O-linked glycan (3 sites)"/>
</dbReference>
<dbReference type="iPTMnet" id="Q8IX01"/>
<dbReference type="PhosphoSitePlus" id="Q8IX01"/>
<dbReference type="SwissPalm" id="Q8IX01"/>
<dbReference type="BioMuta" id="SUGP2"/>
<dbReference type="DMDM" id="308153496"/>
<dbReference type="jPOST" id="Q8IX01"/>
<dbReference type="MassIVE" id="Q8IX01"/>
<dbReference type="PaxDb" id="9606-ENSP00000472286"/>
<dbReference type="PeptideAtlas" id="Q8IX01"/>
<dbReference type="ProteomicsDB" id="70947">
    <molecule id="Q8IX01-1"/>
</dbReference>
<dbReference type="ProteomicsDB" id="70948">
    <molecule id="Q8IX01-3"/>
</dbReference>
<dbReference type="ProteomicsDB" id="70949">
    <molecule id="Q8IX01-4"/>
</dbReference>
<dbReference type="Pumba" id="Q8IX01"/>
<dbReference type="Antibodypedia" id="28312">
    <property type="antibodies" value="157 antibodies from 26 providers"/>
</dbReference>
<dbReference type="DNASU" id="10147"/>
<dbReference type="Ensembl" id="ENST00000330854.15">
    <molecule id="Q8IX01-4"/>
    <property type="protein sequence ID" value="ENSP00000332373.10"/>
    <property type="gene ID" value="ENSG00000064607.17"/>
</dbReference>
<dbReference type="Ensembl" id="ENST00000337018.10">
    <molecule id="Q8IX01-1"/>
    <property type="protein sequence ID" value="ENSP00000337926.5"/>
    <property type="gene ID" value="ENSG00000064607.17"/>
</dbReference>
<dbReference type="Ensembl" id="ENST00000452918.7">
    <molecule id="Q8IX01-1"/>
    <property type="protein sequence ID" value="ENSP00000389380.1"/>
    <property type="gene ID" value="ENSG00000064607.17"/>
</dbReference>
<dbReference type="Ensembl" id="ENST00000594773.5">
    <molecule id="Q8IX01-3"/>
    <property type="protein sequence ID" value="ENSP00000470915.1"/>
    <property type="gene ID" value="ENSG00000064607.17"/>
</dbReference>
<dbReference type="Ensembl" id="ENST00000601879.5">
    <molecule id="Q8IX01-1"/>
    <property type="protein sequence ID" value="ENSP00000472286.1"/>
    <property type="gene ID" value="ENSG00000064607.17"/>
</dbReference>
<dbReference type="GeneID" id="10147"/>
<dbReference type="KEGG" id="hsa:10147"/>
<dbReference type="MANE-Select" id="ENST00000452918.7">
    <property type="protein sequence ID" value="ENSP00000389380.1"/>
    <property type="RefSeq nucleotide sequence ID" value="NM_001017392.5"/>
    <property type="RefSeq protein sequence ID" value="NP_001017392.2"/>
</dbReference>
<dbReference type="UCSC" id="uc002nkx.3">
    <molecule id="Q8IX01-1"/>
    <property type="organism name" value="human"/>
</dbReference>
<dbReference type="AGR" id="HGNC:18641"/>
<dbReference type="CTD" id="10147"/>
<dbReference type="DisGeNET" id="10147"/>
<dbReference type="GeneCards" id="SUGP2"/>
<dbReference type="HGNC" id="HGNC:18641">
    <property type="gene designation" value="SUGP2"/>
</dbReference>
<dbReference type="HPA" id="ENSG00000064607">
    <property type="expression patterns" value="Low tissue specificity"/>
</dbReference>
<dbReference type="MIM" id="607993">
    <property type="type" value="gene"/>
</dbReference>
<dbReference type="neXtProt" id="NX_Q8IX01"/>
<dbReference type="OpenTargets" id="ENSG00000064607"/>
<dbReference type="PharmGKB" id="PA165394371"/>
<dbReference type="VEuPathDB" id="HostDB:ENSG00000064607"/>
<dbReference type="eggNOG" id="KOG0965">
    <property type="taxonomic scope" value="Eukaryota"/>
</dbReference>
<dbReference type="GeneTree" id="ENSGT00410000025695"/>
<dbReference type="HOGENOM" id="CLU_010012_0_0_1"/>
<dbReference type="InParanoid" id="Q8IX01"/>
<dbReference type="OMA" id="KAKRYHI"/>
<dbReference type="OrthoDB" id="4822at2759"/>
<dbReference type="PAN-GO" id="Q8IX01">
    <property type="GO annotations" value="1 GO annotation based on evolutionary models"/>
</dbReference>
<dbReference type="PhylomeDB" id="Q8IX01"/>
<dbReference type="TreeFam" id="TF326321"/>
<dbReference type="PathwayCommons" id="Q8IX01"/>
<dbReference type="SignaLink" id="Q8IX01"/>
<dbReference type="BioGRID-ORCS" id="10147">
    <property type="hits" value="29 hits in 1158 CRISPR screens"/>
</dbReference>
<dbReference type="CD-CODE" id="232F8A39">
    <property type="entry name" value="P-body"/>
</dbReference>
<dbReference type="CD-CODE" id="DEE660B4">
    <property type="entry name" value="Stress granule"/>
</dbReference>
<dbReference type="ChiTaRS" id="SUGP2">
    <property type="organism name" value="human"/>
</dbReference>
<dbReference type="EvolutionaryTrace" id="Q8IX01"/>
<dbReference type="GeneWiki" id="SFRS14"/>
<dbReference type="GenomeRNAi" id="10147"/>
<dbReference type="Pharos" id="Q8IX01">
    <property type="development level" value="Tdark"/>
</dbReference>
<dbReference type="PRO" id="PR:Q8IX01"/>
<dbReference type="Proteomes" id="UP000005640">
    <property type="component" value="Chromosome 19"/>
</dbReference>
<dbReference type="RNAct" id="Q8IX01">
    <property type="molecule type" value="protein"/>
</dbReference>
<dbReference type="Bgee" id="ENSG00000064607">
    <property type="expression patterns" value="Expressed in left testis and 204 other cell types or tissues"/>
</dbReference>
<dbReference type="ExpressionAtlas" id="Q8IX01">
    <property type="expression patterns" value="baseline and differential"/>
</dbReference>
<dbReference type="GO" id="GO:0016604">
    <property type="term" value="C:nuclear body"/>
    <property type="evidence" value="ECO:0000314"/>
    <property type="project" value="HPA"/>
</dbReference>
<dbReference type="GO" id="GO:0005654">
    <property type="term" value="C:nucleoplasm"/>
    <property type="evidence" value="ECO:0000314"/>
    <property type="project" value="HPA"/>
</dbReference>
<dbReference type="GO" id="GO:0003723">
    <property type="term" value="F:RNA binding"/>
    <property type="evidence" value="ECO:0007005"/>
    <property type="project" value="UniProtKB"/>
</dbReference>
<dbReference type="GO" id="GO:0006397">
    <property type="term" value="P:mRNA processing"/>
    <property type="evidence" value="ECO:0007669"/>
    <property type="project" value="UniProtKB-KW"/>
</dbReference>
<dbReference type="GO" id="GO:0008380">
    <property type="term" value="P:RNA splicing"/>
    <property type="evidence" value="ECO:0007669"/>
    <property type="project" value="UniProtKB-KW"/>
</dbReference>
<dbReference type="FunFam" id="1.10.10.790:FF:000008">
    <property type="entry name" value="SURP and G-patch domain-containing protein 2"/>
    <property type="match status" value="1"/>
</dbReference>
<dbReference type="FunFam" id="1.10.10.790:FF:000010">
    <property type="entry name" value="SURP and G-patch domain-containing protein 2"/>
    <property type="match status" value="1"/>
</dbReference>
<dbReference type="Gene3D" id="1.10.10.790">
    <property type="entry name" value="Surp module"/>
    <property type="match status" value="2"/>
</dbReference>
<dbReference type="InterPro" id="IPR000467">
    <property type="entry name" value="G_patch_dom"/>
</dbReference>
<dbReference type="InterPro" id="IPR040169">
    <property type="entry name" value="SUGP1/2"/>
</dbReference>
<dbReference type="InterPro" id="IPR000061">
    <property type="entry name" value="Surp"/>
</dbReference>
<dbReference type="InterPro" id="IPR035967">
    <property type="entry name" value="SWAP/Surp_sf"/>
</dbReference>
<dbReference type="PANTHER" id="PTHR23340">
    <property type="entry name" value="ARGININE/SERINE RICH SPLICING FACTOR SF4/14"/>
    <property type="match status" value="1"/>
</dbReference>
<dbReference type="PANTHER" id="PTHR23340:SF2">
    <property type="entry name" value="SURP AND G-PATCH DOMAIN-CONTAINING PROTEIN 2"/>
    <property type="match status" value="1"/>
</dbReference>
<dbReference type="Pfam" id="PF01585">
    <property type="entry name" value="G-patch"/>
    <property type="match status" value="1"/>
</dbReference>
<dbReference type="Pfam" id="PF01805">
    <property type="entry name" value="Surp"/>
    <property type="match status" value="1"/>
</dbReference>
<dbReference type="SMART" id="SM00443">
    <property type="entry name" value="G_patch"/>
    <property type="match status" value="1"/>
</dbReference>
<dbReference type="SMART" id="SM00648">
    <property type="entry name" value="SWAP"/>
    <property type="match status" value="2"/>
</dbReference>
<dbReference type="SUPFAM" id="SSF109905">
    <property type="entry name" value="Surp module (SWAP domain)"/>
    <property type="match status" value="2"/>
</dbReference>
<dbReference type="PROSITE" id="PS50174">
    <property type="entry name" value="G_PATCH"/>
    <property type="match status" value="1"/>
</dbReference>
<dbReference type="PROSITE" id="PS50128">
    <property type="entry name" value="SURP"/>
    <property type="match status" value="1"/>
</dbReference>
<protein>
    <recommendedName>
        <fullName>SURP and G-patch domain-containing protein 2</fullName>
    </recommendedName>
    <alternativeName>
        <fullName>Arginine/serine-rich-splicing factor 14</fullName>
    </alternativeName>
    <alternativeName>
        <fullName>Splicing factor, arginine/serine-rich 14</fullName>
    </alternativeName>
</protein>